<proteinExistence type="evidence at transcript level"/>
<accession>Q8H0X0</accession>
<accession>Q9SYC3</accession>
<comment type="function">
    <text evidence="1">May be involved in environmental stress response.</text>
</comment>
<feature type="chain" id="PRO_0000269855" description="Zinc finger A20 and AN1 domain-containing stress-associated protein 2">
    <location>
        <begin position="1"/>
        <end position="173"/>
    </location>
</feature>
<feature type="zinc finger region" description="A20-type" evidence="3">
    <location>
        <begin position="12"/>
        <end position="46"/>
    </location>
</feature>
<feature type="zinc finger region" description="AN1-type" evidence="2">
    <location>
        <begin position="108"/>
        <end position="154"/>
    </location>
</feature>
<feature type="binding site" evidence="3">
    <location>
        <position position="18"/>
    </location>
    <ligand>
        <name>Zn(2+)</name>
        <dbReference type="ChEBI" id="CHEBI:29105"/>
        <label>1</label>
    </ligand>
</feature>
<feature type="binding site" evidence="3">
    <location>
        <position position="22"/>
    </location>
    <ligand>
        <name>Zn(2+)</name>
        <dbReference type="ChEBI" id="CHEBI:29105"/>
        <label>1</label>
    </ligand>
</feature>
<feature type="binding site" evidence="3">
    <location>
        <position position="34"/>
    </location>
    <ligand>
        <name>Zn(2+)</name>
        <dbReference type="ChEBI" id="CHEBI:29105"/>
        <label>1</label>
    </ligand>
</feature>
<feature type="binding site" evidence="3">
    <location>
        <position position="37"/>
    </location>
    <ligand>
        <name>Zn(2+)</name>
        <dbReference type="ChEBI" id="CHEBI:29105"/>
        <label>1</label>
    </ligand>
</feature>
<feature type="binding site" evidence="2">
    <location>
        <position position="114"/>
    </location>
    <ligand>
        <name>Zn(2+)</name>
        <dbReference type="ChEBI" id="CHEBI:29105"/>
        <label>2</label>
    </ligand>
</feature>
<feature type="binding site" evidence="2">
    <location>
        <position position="117"/>
    </location>
    <ligand>
        <name>Zn(2+)</name>
        <dbReference type="ChEBI" id="CHEBI:29105"/>
        <label>2</label>
    </ligand>
</feature>
<feature type="binding site" evidence="2">
    <location>
        <position position="128"/>
    </location>
    <ligand>
        <name>Zn(2+)</name>
        <dbReference type="ChEBI" id="CHEBI:29105"/>
        <label>3</label>
    </ligand>
</feature>
<feature type="binding site" evidence="2">
    <location>
        <position position="130"/>
    </location>
    <ligand>
        <name>Zn(2+)</name>
        <dbReference type="ChEBI" id="CHEBI:29105"/>
        <label>3</label>
    </ligand>
</feature>
<feature type="binding site" evidence="2">
    <location>
        <position position="135"/>
    </location>
    <ligand>
        <name>Zn(2+)</name>
        <dbReference type="ChEBI" id="CHEBI:29105"/>
        <label>2</label>
    </ligand>
</feature>
<feature type="binding site" evidence="2">
    <location>
        <position position="138"/>
    </location>
    <ligand>
        <name>Zn(2+)</name>
        <dbReference type="ChEBI" id="CHEBI:29105"/>
        <label>2</label>
    </ligand>
</feature>
<feature type="binding site" evidence="2">
    <location>
        <position position="144"/>
    </location>
    <ligand>
        <name>Zn(2+)</name>
        <dbReference type="ChEBI" id="CHEBI:29105"/>
        <label>3</label>
    </ligand>
</feature>
<feature type="binding site" evidence="2">
    <location>
        <position position="146"/>
    </location>
    <ligand>
        <name>Zn(2+)</name>
        <dbReference type="ChEBI" id="CHEBI:29105"/>
        <label>3</label>
    </ligand>
</feature>
<feature type="sequence conflict" description="In Ref. 3; AAN71995." evidence="4" ref="3">
    <original>A</original>
    <variation>T</variation>
    <location>
        <position position="49"/>
    </location>
</feature>
<protein>
    <recommendedName>
        <fullName>Zinc finger A20 and AN1 domain-containing stress-associated protein 2</fullName>
        <shortName>AtSAP2</shortName>
    </recommendedName>
</protein>
<keyword id="KW-0479">Metal-binding</keyword>
<keyword id="KW-1185">Reference proteome</keyword>
<keyword id="KW-0862">Zinc</keyword>
<keyword id="KW-0863">Zinc-finger</keyword>
<sequence>MDHDKTGCQSPPEGPKLCTNNCGFFGSAATMNMCSKCHKDMLFQQEQGAKFASAVSGTSSSSNIIKETFTAALVDIETKSVEPMTVSVQPSSVQVVAEVVAPEEAAKPKGPSRCTTCNKRVGLTGFKCRCGSLFCGTHRYADVHDCSFNYHAAAQEAIAKANPVVKAEKLDKI</sequence>
<organism>
    <name type="scientific">Arabidopsis thaliana</name>
    <name type="common">Mouse-ear cress</name>
    <dbReference type="NCBI Taxonomy" id="3702"/>
    <lineage>
        <taxon>Eukaryota</taxon>
        <taxon>Viridiplantae</taxon>
        <taxon>Streptophyta</taxon>
        <taxon>Embryophyta</taxon>
        <taxon>Tracheophyta</taxon>
        <taxon>Spermatophyta</taxon>
        <taxon>Magnoliopsida</taxon>
        <taxon>eudicotyledons</taxon>
        <taxon>Gunneridae</taxon>
        <taxon>Pentapetalae</taxon>
        <taxon>rosids</taxon>
        <taxon>malvids</taxon>
        <taxon>Brassicales</taxon>
        <taxon>Brassicaceae</taxon>
        <taxon>Camelineae</taxon>
        <taxon>Arabidopsis</taxon>
    </lineage>
</organism>
<name>SAP2_ARATH</name>
<gene>
    <name type="primary">SAP2</name>
    <name type="ordered locus">At1g51200</name>
    <name type="ORF">F11M15.6</name>
    <name type="ORF">F11M15.7</name>
</gene>
<reference key="1">
    <citation type="journal article" date="2000" name="Nature">
        <title>Sequence and analysis of chromosome 1 of the plant Arabidopsis thaliana.</title>
        <authorList>
            <person name="Theologis A."/>
            <person name="Ecker J.R."/>
            <person name="Palm C.J."/>
            <person name="Federspiel N.A."/>
            <person name="Kaul S."/>
            <person name="White O."/>
            <person name="Alonso J."/>
            <person name="Altafi H."/>
            <person name="Araujo R."/>
            <person name="Bowman C.L."/>
            <person name="Brooks S.Y."/>
            <person name="Buehler E."/>
            <person name="Chan A."/>
            <person name="Chao Q."/>
            <person name="Chen H."/>
            <person name="Cheuk R.F."/>
            <person name="Chin C.W."/>
            <person name="Chung M.K."/>
            <person name="Conn L."/>
            <person name="Conway A.B."/>
            <person name="Conway A.R."/>
            <person name="Creasy T.H."/>
            <person name="Dewar K."/>
            <person name="Dunn P."/>
            <person name="Etgu P."/>
            <person name="Feldblyum T.V."/>
            <person name="Feng J.-D."/>
            <person name="Fong B."/>
            <person name="Fujii C.Y."/>
            <person name="Gill J.E."/>
            <person name="Goldsmith A.D."/>
            <person name="Haas B."/>
            <person name="Hansen N.F."/>
            <person name="Hughes B."/>
            <person name="Huizar L."/>
            <person name="Hunter J.L."/>
            <person name="Jenkins J."/>
            <person name="Johnson-Hopson C."/>
            <person name="Khan S."/>
            <person name="Khaykin E."/>
            <person name="Kim C.J."/>
            <person name="Koo H.L."/>
            <person name="Kremenetskaia I."/>
            <person name="Kurtz D.B."/>
            <person name="Kwan A."/>
            <person name="Lam B."/>
            <person name="Langin-Hooper S."/>
            <person name="Lee A."/>
            <person name="Lee J.M."/>
            <person name="Lenz C.A."/>
            <person name="Li J.H."/>
            <person name="Li Y.-P."/>
            <person name="Lin X."/>
            <person name="Liu S.X."/>
            <person name="Liu Z.A."/>
            <person name="Luros J.S."/>
            <person name="Maiti R."/>
            <person name="Marziali A."/>
            <person name="Militscher J."/>
            <person name="Miranda M."/>
            <person name="Nguyen M."/>
            <person name="Nierman W.C."/>
            <person name="Osborne B.I."/>
            <person name="Pai G."/>
            <person name="Peterson J."/>
            <person name="Pham P.K."/>
            <person name="Rizzo M."/>
            <person name="Rooney T."/>
            <person name="Rowley D."/>
            <person name="Sakano H."/>
            <person name="Salzberg S.L."/>
            <person name="Schwartz J.R."/>
            <person name="Shinn P."/>
            <person name="Southwick A.M."/>
            <person name="Sun H."/>
            <person name="Tallon L.J."/>
            <person name="Tambunga G."/>
            <person name="Toriumi M.J."/>
            <person name="Town C.D."/>
            <person name="Utterback T."/>
            <person name="Van Aken S."/>
            <person name="Vaysberg M."/>
            <person name="Vysotskaia V.S."/>
            <person name="Walker M."/>
            <person name="Wu D."/>
            <person name="Yu G."/>
            <person name="Fraser C.M."/>
            <person name="Venter J.C."/>
            <person name="Davis R.W."/>
        </authorList>
    </citation>
    <scope>NUCLEOTIDE SEQUENCE [LARGE SCALE GENOMIC DNA]</scope>
    <source>
        <strain>cv. Columbia</strain>
    </source>
</reference>
<reference key="2">
    <citation type="journal article" date="2017" name="Plant J.">
        <title>Araport11: a complete reannotation of the Arabidopsis thaliana reference genome.</title>
        <authorList>
            <person name="Cheng C.Y."/>
            <person name="Krishnakumar V."/>
            <person name="Chan A.P."/>
            <person name="Thibaud-Nissen F."/>
            <person name="Schobel S."/>
            <person name="Town C.D."/>
        </authorList>
    </citation>
    <scope>GENOME REANNOTATION</scope>
    <source>
        <strain>cv. Columbia</strain>
    </source>
</reference>
<reference key="3">
    <citation type="journal article" date="2003" name="Science">
        <title>Empirical analysis of transcriptional activity in the Arabidopsis genome.</title>
        <authorList>
            <person name="Yamada K."/>
            <person name="Lim J."/>
            <person name="Dale J.M."/>
            <person name="Chen H."/>
            <person name="Shinn P."/>
            <person name="Palm C.J."/>
            <person name="Southwick A.M."/>
            <person name="Wu H.C."/>
            <person name="Kim C.J."/>
            <person name="Nguyen M."/>
            <person name="Pham P.K."/>
            <person name="Cheuk R.F."/>
            <person name="Karlin-Newmann G."/>
            <person name="Liu S.X."/>
            <person name="Lam B."/>
            <person name="Sakano H."/>
            <person name="Wu T."/>
            <person name="Yu G."/>
            <person name="Miranda M."/>
            <person name="Quach H.L."/>
            <person name="Tripp M."/>
            <person name="Chang C.H."/>
            <person name="Lee J.M."/>
            <person name="Toriumi M.J."/>
            <person name="Chan M.M."/>
            <person name="Tang C.C."/>
            <person name="Onodera C.S."/>
            <person name="Deng J.M."/>
            <person name="Akiyama K."/>
            <person name="Ansari Y."/>
            <person name="Arakawa T."/>
            <person name="Banh J."/>
            <person name="Banno F."/>
            <person name="Bowser L."/>
            <person name="Brooks S.Y."/>
            <person name="Carninci P."/>
            <person name="Chao Q."/>
            <person name="Choy N."/>
            <person name="Enju A."/>
            <person name="Goldsmith A.D."/>
            <person name="Gurjal M."/>
            <person name="Hansen N.F."/>
            <person name="Hayashizaki Y."/>
            <person name="Johnson-Hopson C."/>
            <person name="Hsuan V.W."/>
            <person name="Iida K."/>
            <person name="Karnes M."/>
            <person name="Khan S."/>
            <person name="Koesema E."/>
            <person name="Ishida J."/>
            <person name="Jiang P.X."/>
            <person name="Jones T."/>
            <person name="Kawai J."/>
            <person name="Kamiya A."/>
            <person name="Meyers C."/>
            <person name="Nakajima M."/>
            <person name="Narusaka M."/>
            <person name="Seki M."/>
            <person name="Sakurai T."/>
            <person name="Satou M."/>
            <person name="Tamse R."/>
            <person name="Vaysberg M."/>
            <person name="Wallender E.K."/>
            <person name="Wong C."/>
            <person name="Yamamura Y."/>
            <person name="Yuan S."/>
            <person name="Shinozaki K."/>
            <person name="Davis R.W."/>
            <person name="Theologis A."/>
            <person name="Ecker J.R."/>
        </authorList>
    </citation>
    <scope>NUCLEOTIDE SEQUENCE [LARGE SCALE MRNA]</scope>
    <source>
        <strain>cv. Columbia</strain>
    </source>
</reference>
<reference key="4">
    <citation type="submission" date="2004-07" db="EMBL/GenBank/DDBJ databases">
        <title>Arabidopsis ORF clones.</title>
        <authorList>
            <person name="Cheuk R.F."/>
            <person name="Chen H."/>
            <person name="Kim C.J."/>
            <person name="Shinn P."/>
            <person name="Ecker J.R."/>
        </authorList>
    </citation>
    <scope>NUCLEOTIDE SEQUENCE [LARGE SCALE MRNA]</scope>
    <source>
        <strain>cv. Columbia</strain>
    </source>
</reference>
<reference key="5">
    <citation type="journal article" date="2006" name="Mol. Genet. Genomics">
        <title>Genome-wide analysis of the stress associated protein (SAP) gene family containing A20/AN1 zinc-finger(s) in rice and their phylogenetic relationship with Arabidopsis.</title>
        <authorList>
            <person name="Vij S."/>
            <person name="Tyagi A.K."/>
        </authorList>
    </citation>
    <scope>GENE FAMILY</scope>
</reference>
<dbReference type="EMBL" id="AC006085">
    <property type="protein sequence ID" value="AAD30634.1"/>
    <property type="molecule type" value="Genomic_DNA"/>
</dbReference>
<dbReference type="EMBL" id="CP002684">
    <property type="protein sequence ID" value="AEE32633.1"/>
    <property type="molecule type" value="Genomic_DNA"/>
</dbReference>
<dbReference type="EMBL" id="CP002684">
    <property type="protein sequence ID" value="AEE32634.1"/>
    <property type="molecule type" value="Genomic_DNA"/>
</dbReference>
<dbReference type="EMBL" id="CP002684">
    <property type="protein sequence ID" value="AEE32635.1"/>
    <property type="molecule type" value="Genomic_DNA"/>
</dbReference>
<dbReference type="EMBL" id="CP002684">
    <property type="protein sequence ID" value="AEE32636.1"/>
    <property type="molecule type" value="Genomic_DNA"/>
</dbReference>
<dbReference type="EMBL" id="AY056445">
    <property type="protein sequence ID" value="AAL08301.1"/>
    <property type="molecule type" value="mRNA"/>
</dbReference>
<dbReference type="EMBL" id="BT001984">
    <property type="protein sequence ID" value="AAN71995.1"/>
    <property type="molecule type" value="mRNA"/>
</dbReference>
<dbReference type="EMBL" id="BT015115">
    <property type="protein sequence ID" value="AAT71987.1"/>
    <property type="molecule type" value="mRNA"/>
</dbReference>
<dbReference type="PIR" id="G96549">
    <property type="entry name" value="G96549"/>
</dbReference>
<dbReference type="RefSeq" id="NP_001077694.1">
    <property type="nucleotide sequence ID" value="NM_001084225.2"/>
</dbReference>
<dbReference type="RefSeq" id="NP_001185193.1">
    <property type="nucleotide sequence ID" value="NM_001198264.1"/>
</dbReference>
<dbReference type="RefSeq" id="NP_001185194.1">
    <property type="nucleotide sequence ID" value="NM_001198265.1"/>
</dbReference>
<dbReference type="RefSeq" id="NP_564585.1">
    <property type="nucleotide sequence ID" value="NM_103998.3"/>
</dbReference>
<dbReference type="SMR" id="Q8H0X0"/>
<dbReference type="BioGRID" id="26768">
    <property type="interactions" value="4"/>
</dbReference>
<dbReference type="FunCoup" id="Q8H0X0">
    <property type="interactions" value="3091"/>
</dbReference>
<dbReference type="IntAct" id="Q8H0X0">
    <property type="interactions" value="4"/>
</dbReference>
<dbReference type="STRING" id="3702.Q8H0X0"/>
<dbReference type="PaxDb" id="3702-AT1G51200.3"/>
<dbReference type="ProteomicsDB" id="232867"/>
<dbReference type="EnsemblPlants" id="AT1G51200.1">
    <property type="protein sequence ID" value="AT1G51200.1"/>
    <property type="gene ID" value="AT1G51200"/>
</dbReference>
<dbReference type="EnsemblPlants" id="AT1G51200.2">
    <property type="protein sequence ID" value="AT1G51200.2"/>
    <property type="gene ID" value="AT1G51200"/>
</dbReference>
<dbReference type="EnsemblPlants" id="AT1G51200.3">
    <property type="protein sequence ID" value="AT1G51200.3"/>
    <property type="gene ID" value="AT1G51200"/>
</dbReference>
<dbReference type="EnsemblPlants" id="AT1G51200.4">
    <property type="protein sequence ID" value="AT1G51200.4"/>
    <property type="gene ID" value="AT1G51200"/>
</dbReference>
<dbReference type="GeneID" id="841543"/>
<dbReference type="Gramene" id="AT1G51200.1">
    <property type="protein sequence ID" value="AT1G51200.1"/>
    <property type="gene ID" value="AT1G51200"/>
</dbReference>
<dbReference type="Gramene" id="AT1G51200.2">
    <property type="protein sequence ID" value="AT1G51200.2"/>
    <property type="gene ID" value="AT1G51200"/>
</dbReference>
<dbReference type="Gramene" id="AT1G51200.3">
    <property type="protein sequence ID" value="AT1G51200.3"/>
    <property type="gene ID" value="AT1G51200"/>
</dbReference>
<dbReference type="Gramene" id="AT1G51200.4">
    <property type="protein sequence ID" value="AT1G51200.4"/>
    <property type="gene ID" value="AT1G51200"/>
</dbReference>
<dbReference type="KEGG" id="ath:AT1G51200"/>
<dbReference type="Araport" id="AT1G51200"/>
<dbReference type="TAIR" id="AT1G51200"/>
<dbReference type="eggNOG" id="KOG3173">
    <property type="taxonomic scope" value="Eukaryota"/>
</dbReference>
<dbReference type="HOGENOM" id="CLU_057016_5_0_1"/>
<dbReference type="InParanoid" id="Q8H0X0"/>
<dbReference type="OMA" id="NTFCASH"/>
<dbReference type="PhylomeDB" id="Q8H0X0"/>
<dbReference type="PRO" id="PR:Q8H0X0"/>
<dbReference type="Proteomes" id="UP000006548">
    <property type="component" value="Chromosome 1"/>
</dbReference>
<dbReference type="ExpressionAtlas" id="Q8H0X0">
    <property type="expression patterns" value="baseline and differential"/>
</dbReference>
<dbReference type="GO" id="GO:0003677">
    <property type="term" value="F:DNA binding"/>
    <property type="evidence" value="ECO:0007669"/>
    <property type="project" value="InterPro"/>
</dbReference>
<dbReference type="GO" id="GO:0008270">
    <property type="term" value="F:zinc ion binding"/>
    <property type="evidence" value="ECO:0007669"/>
    <property type="project" value="UniProtKB-KW"/>
</dbReference>
<dbReference type="FunFam" id="4.10.1110.10:FF:000001">
    <property type="entry name" value="Zinc finger AN1-type containing 6"/>
    <property type="match status" value="1"/>
</dbReference>
<dbReference type="Gene3D" id="1.20.5.4770">
    <property type="match status" value="1"/>
</dbReference>
<dbReference type="Gene3D" id="4.10.1110.10">
    <property type="entry name" value="AN1-like Zinc finger"/>
    <property type="match status" value="1"/>
</dbReference>
<dbReference type="InterPro" id="IPR035896">
    <property type="entry name" value="AN1-like_Znf"/>
</dbReference>
<dbReference type="InterPro" id="IPR050652">
    <property type="entry name" value="AN1_A20_ZnFinger"/>
</dbReference>
<dbReference type="InterPro" id="IPR002653">
    <property type="entry name" value="Znf_A20"/>
</dbReference>
<dbReference type="InterPro" id="IPR000058">
    <property type="entry name" value="Znf_AN1"/>
</dbReference>
<dbReference type="PANTHER" id="PTHR10634">
    <property type="entry name" value="AN1-TYPE ZINC FINGER PROTEIN"/>
    <property type="match status" value="1"/>
</dbReference>
<dbReference type="PANTHER" id="PTHR10634:SF104">
    <property type="entry name" value="ZINC FINGER A20 AND AN1 DOMAIN-CONTAINING STRESS-ASSOCIATED PROTEIN 2"/>
    <property type="match status" value="1"/>
</dbReference>
<dbReference type="Pfam" id="PF01754">
    <property type="entry name" value="zf-A20"/>
    <property type="match status" value="1"/>
</dbReference>
<dbReference type="Pfam" id="PF01428">
    <property type="entry name" value="zf-AN1"/>
    <property type="match status" value="1"/>
</dbReference>
<dbReference type="SMART" id="SM00259">
    <property type="entry name" value="ZnF_A20"/>
    <property type="match status" value="1"/>
</dbReference>
<dbReference type="SMART" id="SM00154">
    <property type="entry name" value="ZnF_AN1"/>
    <property type="match status" value="1"/>
</dbReference>
<dbReference type="SUPFAM" id="SSF118310">
    <property type="entry name" value="AN1-like Zinc finger"/>
    <property type="match status" value="1"/>
</dbReference>
<dbReference type="SUPFAM" id="SSF57716">
    <property type="entry name" value="Glucocorticoid receptor-like (DNA-binding domain)"/>
    <property type="match status" value="1"/>
</dbReference>
<dbReference type="PROSITE" id="PS51036">
    <property type="entry name" value="ZF_A20"/>
    <property type="match status" value="1"/>
</dbReference>
<dbReference type="PROSITE" id="PS51039">
    <property type="entry name" value="ZF_AN1"/>
    <property type="match status" value="1"/>
</dbReference>
<evidence type="ECO:0000250" key="1"/>
<evidence type="ECO:0000255" key="2">
    <source>
        <dbReference type="PROSITE-ProRule" id="PRU00449"/>
    </source>
</evidence>
<evidence type="ECO:0000255" key="3">
    <source>
        <dbReference type="PROSITE-ProRule" id="PRU00451"/>
    </source>
</evidence>
<evidence type="ECO:0000305" key="4"/>